<protein>
    <recommendedName>
        <fullName>Protein MGF 360-18R</fullName>
    </recommendedName>
</protein>
<comment type="function">
    <text evidence="1">Plays a role in virus cell tropism, and may be required for efficient virus replication in macrophages.</text>
</comment>
<comment type="similarity">
    <text evidence="2">Belongs to the asfivirus MGF 360 family.</text>
</comment>
<gene>
    <name type="ordered locus">BA71V-153</name>
    <name type="ORF">DP148R</name>
</gene>
<feature type="chain" id="PRO_0000373301" description="Protein MGF 360-18R">
    <location>
        <begin position="1"/>
        <end position="148"/>
    </location>
</feature>
<reference key="1">
    <citation type="journal article" date="1995" name="Virology">
        <title>Analysis of the complete nucleotide sequence of African swine fever virus.</title>
        <authorList>
            <person name="Yanez R.J."/>
            <person name="Rodriguez J.M."/>
            <person name="Nogal M.L."/>
            <person name="Yuste L."/>
            <person name="Enriquez C."/>
            <person name="Rodriguez J.F."/>
            <person name="Vinuela E."/>
        </authorList>
    </citation>
    <scope>NUCLEOTIDE SEQUENCE [LARGE SCALE GENOMIC DNA]</scope>
</reference>
<reference key="2">
    <citation type="journal article" date="2001" name="J. Virol.">
        <title>African swine fever virus multigene family 360 and 530 genes are novel macrophage host range determinants.</title>
        <authorList>
            <person name="Zsak L."/>
            <person name="Lu Z."/>
            <person name="Burrage T.G."/>
            <person name="Neilan J.G."/>
            <person name="Kutish G.F."/>
            <person name="Moore D.M."/>
            <person name="Rock D.L."/>
        </authorList>
    </citation>
    <scope>FUNCTION</scope>
</reference>
<organism>
    <name type="scientific">African swine fever virus (strain Badajoz 1971 Vero-adapted)</name>
    <name type="common">Ba71V</name>
    <name type="synonym">ASFV</name>
    <dbReference type="NCBI Taxonomy" id="10498"/>
    <lineage>
        <taxon>Viruses</taxon>
        <taxon>Varidnaviria</taxon>
        <taxon>Bamfordvirae</taxon>
        <taxon>Nucleocytoviricota</taxon>
        <taxon>Pokkesviricetes</taxon>
        <taxon>Asfuvirales</taxon>
        <taxon>Asfarviridae</taxon>
        <taxon>Asfivirus</taxon>
        <taxon>African swine fever virus</taxon>
    </lineage>
</organism>
<dbReference type="EMBL" id="U18466">
    <property type="protein sequence ID" value="AAA65379.1"/>
    <property type="molecule type" value="Genomic_DNA"/>
</dbReference>
<dbReference type="RefSeq" id="NP_042843.1">
    <property type="nucleotide sequence ID" value="NC_001659.2"/>
</dbReference>
<dbReference type="GeneID" id="22220379"/>
<dbReference type="KEGG" id="vg:22220379"/>
<dbReference type="Proteomes" id="UP000000624">
    <property type="component" value="Segment"/>
</dbReference>
<evidence type="ECO:0000269" key="1">
    <source>
    </source>
</evidence>
<evidence type="ECO:0000305" key="2"/>
<proteinExistence type="inferred from homology"/>
<name>36018_ASFB7</name>
<accession>Q65211</accession>
<keyword id="KW-1185">Reference proteome</keyword>
<organismHost>
    <name type="scientific">Ornithodoros</name>
    <name type="common">relapsing fever ticks</name>
    <dbReference type="NCBI Taxonomy" id="6937"/>
</organismHost>
<organismHost>
    <name type="scientific">Sus scrofa</name>
    <name type="common">Pig</name>
    <dbReference type="NCBI Taxonomy" id="9823"/>
</organismHost>
<sequence length="148" mass="17220">MLERLYDANIYNILSRLRPEKVRNKAIELYWVFRAIHICHAPLVLDIVRYEEPDFAELAFICAAYFGEPQVMYLLYKYMPLTRAVLTDAIQISLESNNQVGICYAYLMGGSLKGLVSAPLRKRLRAKLRSQRKKKDVLSPHDFLLLLQ</sequence>